<feature type="chain" id="PRO_0000094181" description="CDP-archaeol synthase">
    <location>
        <begin position="1"/>
        <end position="166"/>
    </location>
</feature>
<feature type="transmembrane region" description="Helical" evidence="1">
    <location>
        <begin position="1"/>
        <end position="21"/>
    </location>
</feature>
<feature type="transmembrane region" description="Helical" evidence="1">
    <location>
        <begin position="55"/>
        <end position="75"/>
    </location>
</feature>
<feature type="transmembrane region" description="Helical" evidence="1">
    <location>
        <begin position="78"/>
        <end position="98"/>
    </location>
</feature>
<feature type="transmembrane region" description="Helical" evidence="1">
    <location>
        <begin position="110"/>
        <end position="130"/>
    </location>
</feature>
<feature type="transmembrane region" description="Helical" evidence="1">
    <location>
        <begin position="131"/>
        <end position="151"/>
    </location>
</feature>
<keyword id="KW-1003">Cell membrane</keyword>
<keyword id="KW-0444">Lipid biosynthesis</keyword>
<keyword id="KW-0443">Lipid metabolism</keyword>
<keyword id="KW-0460">Magnesium</keyword>
<keyword id="KW-0472">Membrane</keyword>
<keyword id="KW-0594">Phospholipid biosynthesis</keyword>
<keyword id="KW-1208">Phospholipid metabolism</keyword>
<keyword id="KW-1185">Reference proteome</keyword>
<keyword id="KW-0808">Transferase</keyword>
<keyword id="KW-0812">Transmembrane</keyword>
<keyword id="KW-1133">Transmembrane helix</keyword>
<comment type="function">
    <text evidence="1">Catalyzes the formation of CDP-2,3-bis-(O-geranylgeranyl)-sn-glycerol (CDP-archaeol) from 2,3-bis-(O-geranylgeranyl)-sn-glycerol 1-phosphate (DGGGP) and CTP. This reaction is the third ether-bond-formation step in the biosynthesis of archaeal membrane lipids.</text>
</comment>
<comment type="catalytic activity">
    <reaction evidence="1">
        <text>2,3-bis-O-(geranylgeranyl)-sn-glycerol 1-phosphate + CTP + H(+) = CDP-2,3-bis-O-(geranylgeranyl)-sn-glycerol + diphosphate</text>
        <dbReference type="Rhea" id="RHEA:25690"/>
        <dbReference type="ChEBI" id="CHEBI:15378"/>
        <dbReference type="ChEBI" id="CHEBI:33019"/>
        <dbReference type="ChEBI" id="CHEBI:37563"/>
        <dbReference type="ChEBI" id="CHEBI:58837"/>
        <dbReference type="ChEBI" id="CHEBI:58838"/>
        <dbReference type="EC" id="2.7.7.67"/>
    </reaction>
</comment>
<comment type="cofactor">
    <cofactor evidence="1">
        <name>Mg(2+)</name>
        <dbReference type="ChEBI" id="CHEBI:18420"/>
    </cofactor>
</comment>
<comment type="pathway">
    <text evidence="1">Membrane lipid metabolism; glycerophospholipid metabolism.</text>
</comment>
<comment type="subcellular location">
    <subcellularLocation>
        <location evidence="1">Cell membrane</location>
        <topology evidence="1">Multi-pass membrane protein</topology>
    </subcellularLocation>
</comment>
<comment type="similarity">
    <text evidence="1">Belongs to the CDP-archaeol synthase family.</text>
</comment>
<dbReference type="EC" id="2.7.7.67" evidence="1"/>
<dbReference type="EMBL" id="BA000023">
    <property type="protein sequence ID" value="BAB65459.1"/>
    <property type="molecule type" value="Genomic_DNA"/>
</dbReference>
<dbReference type="RefSeq" id="WP_010978442.1">
    <property type="nucleotide sequence ID" value="NC_003106.2"/>
</dbReference>
<dbReference type="SMR" id="Q975E2"/>
<dbReference type="STRING" id="273063.STK_04650"/>
<dbReference type="GeneID" id="1458408"/>
<dbReference type="KEGG" id="sto:STK_04650"/>
<dbReference type="PATRIC" id="fig|273063.9.peg.540"/>
<dbReference type="eggNOG" id="arCOG04106">
    <property type="taxonomic scope" value="Archaea"/>
</dbReference>
<dbReference type="OrthoDB" id="45383at2157"/>
<dbReference type="UniPathway" id="UPA00940"/>
<dbReference type="Proteomes" id="UP000001015">
    <property type="component" value="Chromosome"/>
</dbReference>
<dbReference type="GO" id="GO:0005886">
    <property type="term" value="C:plasma membrane"/>
    <property type="evidence" value="ECO:0007669"/>
    <property type="project" value="UniProtKB-SubCell"/>
</dbReference>
<dbReference type="GO" id="GO:0043338">
    <property type="term" value="F:CDP-2,3-bis-(O-geranylgeranyl)-sn-glycerol synthase activity"/>
    <property type="evidence" value="ECO:0007669"/>
    <property type="project" value="UniProtKB-EC"/>
</dbReference>
<dbReference type="GO" id="GO:0046474">
    <property type="term" value="P:glycerophospholipid biosynthetic process"/>
    <property type="evidence" value="ECO:0007669"/>
    <property type="project" value="UniProtKB-UniRule"/>
</dbReference>
<dbReference type="HAMAP" id="MF_01117">
    <property type="entry name" value="CDP_archaeol_synth"/>
    <property type="match status" value="1"/>
</dbReference>
<dbReference type="InterPro" id="IPR032690">
    <property type="entry name" value="CarS"/>
</dbReference>
<dbReference type="InterPro" id="IPR002726">
    <property type="entry name" value="CarS_archaea"/>
</dbReference>
<dbReference type="NCBIfam" id="NF003114">
    <property type="entry name" value="PRK04032.1"/>
    <property type="match status" value="1"/>
</dbReference>
<dbReference type="PANTHER" id="PTHR39650">
    <property type="entry name" value="CDP-ARCHAEOL SYNTHASE"/>
    <property type="match status" value="1"/>
</dbReference>
<dbReference type="PANTHER" id="PTHR39650:SF1">
    <property type="entry name" value="CDP-ARCHAEOL SYNTHASE"/>
    <property type="match status" value="1"/>
</dbReference>
<dbReference type="Pfam" id="PF01864">
    <property type="entry name" value="CarS-like"/>
    <property type="match status" value="1"/>
</dbReference>
<sequence length="166" mass="18363">MPIIYYVIFAILYYLPALVANGSAPFVKNGTPIDFRKNFVDGRRLLGDGKTFEGLLVAVTFGTTVGIILAKFLGIYWIYVSFIESLLAMLGDMVGAFIKRRLGLARGARAIGLDQLDFILGATLALIISKISLNIYEFLSIVVIAFVLHILTNNVAYRLKIKSVPW</sequence>
<gene>
    <name evidence="1" type="primary">carS</name>
    <name type="ordered locus">STK_04650</name>
</gene>
<evidence type="ECO:0000255" key="1">
    <source>
        <dbReference type="HAMAP-Rule" id="MF_01117"/>
    </source>
</evidence>
<name>CDPAS_SULTO</name>
<protein>
    <recommendedName>
        <fullName evidence="1">CDP-archaeol synthase</fullName>
        <ecNumber evidence="1">2.7.7.67</ecNumber>
    </recommendedName>
    <alternativeName>
        <fullName evidence="1">CDP-2,3-bis-(O-geranylgeranyl)-sn-glycerol synthase</fullName>
    </alternativeName>
</protein>
<organism>
    <name type="scientific">Sulfurisphaera tokodaii (strain DSM 16993 / JCM 10545 / NBRC 100140 / 7)</name>
    <name type="common">Sulfolobus tokodaii</name>
    <dbReference type="NCBI Taxonomy" id="273063"/>
    <lineage>
        <taxon>Archaea</taxon>
        <taxon>Thermoproteota</taxon>
        <taxon>Thermoprotei</taxon>
        <taxon>Sulfolobales</taxon>
        <taxon>Sulfolobaceae</taxon>
        <taxon>Sulfurisphaera</taxon>
    </lineage>
</organism>
<proteinExistence type="inferred from homology"/>
<reference key="1">
    <citation type="journal article" date="2001" name="DNA Res.">
        <title>Complete genome sequence of an aerobic thermoacidophilic Crenarchaeon, Sulfolobus tokodaii strain7.</title>
        <authorList>
            <person name="Kawarabayasi Y."/>
            <person name="Hino Y."/>
            <person name="Horikawa H."/>
            <person name="Jin-no K."/>
            <person name="Takahashi M."/>
            <person name="Sekine M."/>
            <person name="Baba S."/>
            <person name="Ankai A."/>
            <person name="Kosugi H."/>
            <person name="Hosoyama A."/>
            <person name="Fukui S."/>
            <person name="Nagai Y."/>
            <person name="Nishijima K."/>
            <person name="Otsuka R."/>
            <person name="Nakazawa H."/>
            <person name="Takamiya M."/>
            <person name="Kato Y."/>
            <person name="Yoshizawa T."/>
            <person name="Tanaka T."/>
            <person name="Kudoh Y."/>
            <person name="Yamazaki J."/>
            <person name="Kushida N."/>
            <person name="Oguchi A."/>
            <person name="Aoki K."/>
            <person name="Masuda S."/>
            <person name="Yanagii M."/>
            <person name="Nishimura M."/>
            <person name="Yamagishi A."/>
            <person name="Oshima T."/>
            <person name="Kikuchi H."/>
        </authorList>
    </citation>
    <scope>NUCLEOTIDE SEQUENCE [LARGE SCALE GENOMIC DNA]</scope>
    <source>
        <strain>DSM 16993 / JCM 10545 / NBRC 100140 / 7</strain>
    </source>
</reference>
<accession>Q975E2</accession>